<accession>Q10179</accession>
<gene>
    <name type="primary">grs1</name>
    <name type="ORF">SPAC3F10.03</name>
</gene>
<name>SYG_SCHPO</name>
<proteinExistence type="inferred from homology"/>
<protein>
    <recommendedName>
        <fullName>Putative glycine--tRNA ligase</fullName>
        <ecNumber evidence="1">6.1.1.14</ecNumber>
    </recommendedName>
    <alternativeName>
        <fullName>Diadenosine tetraphosphate synthetase</fullName>
        <shortName>Ap4A synthetase</shortName>
        <ecNumber evidence="1">2.7.7.-</ecNumber>
    </alternativeName>
    <alternativeName>
        <fullName>Glycyl-tRNA synthetase</fullName>
        <shortName>GlyRS</shortName>
    </alternativeName>
</protein>
<sequence length="652" mass="74005">MTEVSKAAAFDRTQFEELMKKRFFFSPSFQIYGGISGLYDYGPPGSALQSNLVDIWRKHFVIEESMLEVDCSMLTPHEVLKTSGHVDKFADWMCKDPATGEIFRADHLVEEVLEARLKGDKEARGQNSNDQPEESDDKKKRKKKVKEIRATRLDDKTVEEYEFILAQIDNYDGDQLGELMKKYDIRNPATNGELETPRQFNLMFETQIGPSGGLKGYLRPETAQGQFLNFSRLLEFNNGKVPFASAMVGKAFRNEISPRSGLLRVREFLMAEVEHFVDPKNKEHDRFDEVSHMPLRLLPRGVQLEGKTDILEMPIGDAVKKGIVDNTTLGYFMARISLFLEKIGIDMNRVRFRQHMSNEMAHYACDCWDAEIQCSYGWIECVGCADRSAYDLSVHSKATKTPLVVQEALPEPVVVEQFEVEVNRKKFGPRFKRDAKAVEEAMISWPESEKVEKSAQLVAEGKIIVNVNGVEHTVESDLVTIEKRKHTEHIRTYTPNVIEPSFGLGRILYVLMEHAYWTRPEDVNRGVLSFPASIAPIKALIVPLSRNAEFAPFVKKLSAKLRNLGISNKIDDSNANIGRRYARNDELGTPFGLTVDFETLQNETITLRERDSTKQVRGSQDEVIAALVSMVEGKSSFEDALAKFGEFKSTQE</sequence>
<feature type="chain" id="PRO_0000073004" description="Putative glycine--tRNA ligase">
    <location>
        <begin position="1"/>
        <end position="652"/>
    </location>
</feature>
<feature type="region of interest" description="Disordered" evidence="2">
    <location>
        <begin position="119"/>
        <end position="145"/>
    </location>
</feature>
<feature type="binding site" evidence="1">
    <location>
        <position position="221"/>
    </location>
    <ligand>
        <name>glycine</name>
        <dbReference type="ChEBI" id="CHEBI:57305"/>
    </ligand>
</feature>
<feature type="binding site" evidence="1">
    <location>
        <begin position="253"/>
        <end position="255"/>
    </location>
    <ligand>
        <name>ATP</name>
        <dbReference type="ChEBI" id="CHEBI:30616"/>
    </ligand>
</feature>
<feature type="binding site" evidence="1">
    <location>
        <begin position="264"/>
        <end position="265"/>
    </location>
    <ligand>
        <name>ATP</name>
        <dbReference type="ChEBI" id="CHEBI:30616"/>
    </ligand>
</feature>
<feature type="binding site" evidence="1">
    <location>
        <position position="272"/>
    </location>
    <ligand>
        <name>glycine</name>
        <dbReference type="ChEBI" id="CHEBI:57305"/>
    </ligand>
</feature>
<feature type="binding site" evidence="1">
    <location>
        <begin position="380"/>
        <end position="381"/>
    </location>
    <ligand>
        <name>ATP</name>
        <dbReference type="ChEBI" id="CHEBI:30616"/>
    </ligand>
</feature>
<feature type="binding site" evidence="1">
    <location>
        <begin position="499"/>
        <end position="501"/>
    </location>
    <ligand>
        <name>glycine</name>
        <dbReference type="ChEBI" id="CHEBI:57305"/>
    </ligand>
</feature>
<feature type="binding site" evidence="1">
    <location>
        <position position="506"/>
    </location>
    <ligand>
        <name>ATP</name>
        <dbReference type="ChEBI" id="CHEBI:30616"/>
    </ligand>
</feature>
<comment type="function">
    <text evidence="1">Catalyzes the ATP-dependent ligation of glycine to the 3'-end of its cognate tRNA, via the formation of an aminoacyl-adenylate intermediate (Gly-AMP). Also produces diadenosine tetraphosphate (Ap4A), a universal pleiotropic signaling molecule needed for cell regulation pathways, by direct condensation of 2 ATPs. Thereby, may play a special role in Ap4A homeostasis.</text>
</comment>
<comment type="catalytic activity">
    <reaction evidence="1">
        <text>tRNA(Gly) + glycine + ATP = glycyl-tRNA(Gly) + AMP + diphosphate</text>
        <dbReference type="Rhea" id="RHEA:16013"/>
        <dbReference type="Rhea" id="RHEA-COMP:9664"/>
        <dbReference type="Rhea" id="RHEA-COMP:9683"/>
        <dbReference type="ChEBI" id="CHEBI:30616"/>
        <dbReference type="ChEBI" id="CHEBI:33019"/>
        <dbReference type="ChEBI" id="CHEBI:57305"/>
        <dbReference type="ChEBI" id="CHEBI:78442"/>
        <dbReference type="ChEBI" id="CHEBI:78522"/>
        <dbReference type="ChEBI" id="CHEBI:456215"/>
        <dbReference type="EC" id="6.1.1.14"/>
    </reaction>
</comment>
<comment type="catalytic activity">
    <reaction evidence="1">
        <text>2 ATP + H(+) = P(1),P(4)-bis(5'-adenosyl) tetraphosphate + diphosphate</text>
        <dbReference type="Rhea" id="RHEA:34935"/>
        <dbReference type="ChEBI" id="CHEBI:15378"/>
        <dbReference type="ChEBI" id="CHEBI:30616"/>
        <dbReference type="ChEBI" id="CHEBI:33019"/>
        <dbReference type="ChEBI" id="CHEBI:58141"/>
    </reaction>
</comment>
<comment type="subunit">
    <text evidence="1">Homodimer.</text>
</comment>
<comment type="subcellular location">
    <subcellularLocation>
        <location evidence="3">Cytoplasm</location>
    </subcellularLocation>
</comment>
<comment type="similarity">
    <text evidence="4">Belongs to the class-II aminoacyl-tRNA synthetase family.</text>
</comment>
<keyword id="KW-0030">Aminoacyl-tRNA synthetase</keyword>
<keyword id="KW-0067">ATP-binding</keyword>
<keyword id="KW-0963">Cytoplasm</keyword>
<keyword id="KW-0436">Ligase</keyword>
<keyword id="KW-0547">Nucleotide-binding</keyword>
<keyword id="KW-0648">Protein biosynthesis</keyword>
<keyword id="KW-1185">Reference proteome</keyword>
<keyword id="KW-0808">Transferase</keyword>
<reference key="1">
    <citation type="journal article" date="2002" name="Nature">
        <title>The genome sequence of Schizosaccharomyces pombe.</title>
        <authorList>
            <person name="Wood V."/>
            <person name="Gwilliam R."/>
            <person name="Rajandream M.A."/>
            <person name="Lyne M.H."/>
            <person name="Lyne R."/>
            <person name="Stewart A."/>
            <person name="Sgouros J.G."/>
            <person name="Peat N."/>
            <person name="Hayles J."/>
            <person name="Baker S.G."/>
            <person name="Basham D."/>
            <person name="Bowman S."/>
            <person name="Brooks K."/>
            <person name="Brown D."/>
            <person name="Brown S."/>
            <person name="Chillingworth T."/>
            <person name="Churcher C.M."/>
            <person name="Collins M."/>
            <person name="Connor R."/>
            <person name="Cronin A."/>
            <person name="Davis P."/>
            <person name="Feltwell T."/>
            <person name="Fraser A."/>
            <person name="Gentles S."/>
            <person name="Goble A."/>
            <person name="Hamlin N."/>
            <person name="Harris D.E."/>
            <person name="Hidalgo J."/>
            <person name="Hodgson G."/>
            <person name="Holroyd S."/>
            <person name="Hornsby T."/>
            <person name="Howarth S."/>
            <person name="Huckle E.J."/>
            <person name="Hunt S."/>
            <person name="Jagels K."/>
            <person name="James K.D."/>
            <person name="Jones L."/>
            <person name="Jones M."/>
            <person name="Leather S."/>
            <person name="McDonald S."/>
            <person name="McLean J."/>
            <person name="Mooney P."/>
            <person name="Moule S."/>
            <person name="Mungall K.L."/>
            <person name="Murphy L.D."/>
            <person name="Niblett D."/>
            <person name="Odell C."/>
            <person name="Oliver K."/>
            <person name="O'Neil S."/>
            <person name="Pearson D."/>
            <person name="Quail M.A."/>
            <person name="Rabbinowitsch E."/>
            <person name="Rutherford K.M."/>
            <person name="Rutter S."/>
            <person name="Saunders D."/>
            <person name="Seeger K."/>
            <person name="Sharp S."/>
            <person name="Skelton J."/>
            <person name="Simmonds M.N."/>
            <person name="Squares R."/>
            <person name="Squares S."/>
            <person name="Stevens K."/>
            <person name="Taylor K."/>
            <person name="Taylor R.G."/>
            <person name="Tivey A."/>
            <person name="Walsh S.V."/>
            <person name="Warren T."/>
            <person name="Whitehead S."/>
            <person name="Woodward J.R."/>
            <person name="Volckaert G."/>
            <person name="Aert R."/>
            <person name="Robben J."/>
            <person name="Grymonprez B."/>
            <person name="Weltjens I."/>
            <person name="Vanstreels E."/>
            <person name="Rieger M."/>
            <person name="Schaefer M."/>
            <person name="Mueller-Auer S."/>
            <person name="Gabel C."/>
            <person name="Fuchs M."/>
            <person name="Duesterhoeft A."/>
            <person name="Fritzc C."/>
            <person name="Holzer E."/>
            <person name="Moestl D."/>
            <person name="Hilbert H."/>
            <person name="Borzym K."/>
            <person name="Langer I."/>
            <person name="Beck A."/>
            <person name="Lehrach H."/>
            <person name="Reinhardt R."/>
            <person name="Pohl T.M."/>
            <person name="Eger P."/>
            <person name="Zimmermann W."/>
            <person name="Wedler H."/>
            <person name="Wambutt R."/>
            <person name="Purnelle B."/>
            <person name="Goffeau A."/>
            <person name="Cadieu E."/>
            <person name="Dreano S."/>
            <person name="Gloux S."/>
            <person name="Lelaure V."/>
            <person name="Mottier S."/>
            <person name="Galibert F."/>
            <person name="Aves S.J."/>
            <person name="Xiang Z."/>
            <person name="Hunt C."/>
            <person name="Moore K."/>
            <person name="Hurst S.M."/>
            <person name="Lucas M."/>
            <person name="Rochet M."/>
            <person name="Gaillardin C."/>
            <person name="Tallada V.A."/>
            <person name="Garzon A."/>
            <person name="Thode G."/>
            <person name="Daga R.R."/>
            <person name="Cruzado L."/>
            <person name="Jimenez J."/>
            <person name="Sanchez M."/>
            <person name="del Rey F."/>
            <person name="Benito J."/>
            <person name="Dominguez A."/>
            <person name="Revuelta J.L."/>
            <person name="Moreno S."/>
            <person name="Armstrong J."/>
            <person name="Forsburg S.L."/>
            <person name="Cerutti L."/>
            <person name="Lowe T."/>
            <person name="McCombie W.R."/>
            <person name="Paulsen I."/>
            <person name="Potashkin J."/>
            <person name="Shpakovski G.V."/>
            <person name="Ussery D."/>
            <person name="Barrell B.G."/>
            <person name="Nurse P."/>
        </authorList>
    </citation>
    <scope>NUCLEOTIDE SEQUENCE [LARGE SCALE GENOMIC DNA]</scope>
    <source>
        <strain>972 / ATCC 24843</strain>
    </source>
</reference>
<reference key="2">
    <citation type="journal article" date="2006" name="Nat. Biotechnol.">
        <title>ORFeome cloning and global analysis of protein localization in the fission yeast Schizosaccharomyces pombe.</title>
        <authorList>
            <person name="Matsuyama A."/>
            <person name="Arai R."/>
            <person name="Yashiroda Y."/>
            <person name="Shirai A."/>
            <person name="Kamata A."/>
            <person name="Sekido S."/>
            <person name="Kobayashi Y."/>
            <person name="Hashimoto A."/>
            <person name="Hamamoto M."/>
            <person name="Hiraoka Y."/>
            <person name="Horinouchi S."/>
            <person name="Yoshida M."/>
        </authorList>
    </citation>
    <scope>SUBCELLULAR LOCATION [LARGE SCALE ANALYSIS]</scope>
</reference>
<organism>
    <name type="scientific">Schizosaccharomyces pombe (strain 972 / ATCC 24843)</name>
    <name type="common">Fission yeast</name>
    <dbReference type="NCBI Taxonomy" id="284812"/>
    <lineage>
        <taxon>Eukaryota</taxon>
        <taxon>Fungi</taxon>
        <taxon>Dikarya</taxon>
        <taxon>Ascomycota</taxon>
        <taxon>Taphrinomycotina</taxon>
        <taxon>Schizosaccharomycetes</taxon>
        <taxon>Schizosaccharomycetales</taxon>
        <taxon>Schizosaccharomycetaceae</taxon>
        <taxon>Schizosaccharomyces</taxon>
    </lineage>
</organism>
<evidence type="ECO:0000250" key="1">
    <source>
        <dbReference type="UniProtKB" id="P41250"/>
    </source>
</evidence>
<evidence type="ECO:0000256" key="2">
    <source>
        <dbReference type="SAM" id="MobiDB-lite"/>
    </source>
</evidence>
<evidence type="ECO:0000269" key="3">
    <source>
    </source>
</evidence>
<evidence type="ECO:0000305" key="4"/>
<dbReference type="EC" id="6.1.1.14" evidence="1"/>
<dbReference type="EC" id="2.7.7.-" evidence="1"/>
<dbReference type="EMBL" id="CU329670">
    <property type="protein sequence ID" value="CAA93301.1"/>
    <property type="molecule type" value="Genomic_DNA"/>
</dbReference>
<dbReference type="PIR" id="T38704">
    <property type="entry name" value="T38704"/>
</dbReference>
<dbReference type="RefSeq" id="NP_593935.1">
    <property type="nucleotide sequence ID" value="NM_001019363.2"/>
</dbReference>
<dbReference type="SMR" id="Q10179"/>
<dbReference type="BioGRID" id="279611">
    <property type="interactions" value="4"/>
</dbReference>
<dbReference type="FunCoup" id="Q10179">
    <property type="interactions" value="759"/>
</dbReference>
<dbReference type="STRING" id="284812.Q10179"/>
<dbReference type="iPTMnet" id="Q10179"/>
<dbReference type="PaxDb" id="4896-SPAC3F10.03.1"/>
<dbReference type="EnsemblFungi" id="SPAC3F10.03.1">
    <property type="protein sequence ID" value="SPAC3F10.03.1:pep"/>
    <property type="gene ID" value="SPAC3F10.03"/>
</dbReference>
<dbReference type="GeneID" id="2543181"/>
<dbReference type="KEGG" id="spo:2543181"/>
<dbReference type="PomBase" id="SPAC3F10.03">
    <property type="gene designation" value="grs1"/>
</dbReference>
<dbReference type="VEuPathDB" id="FungiDB:SPAC3F10.03"/>
<dbReference type="eggNOG" id="KOG2298">
    <property type="taxonomic scope" value="Eukaryota"/>
</dbReference>
<dbReference type="HOGENOM" id="CLU_015515_1_0_1"/>
<dbReference type="InParanoid" id="Q10179"/>
<dbReference type="OMA" id="HFVNFQR"/>
<dbReference type="PhylomeDB" id="Q10179"/>
<dbReference type="PRO" id="PR:Q10179"/>
<dbReference type="Proteomes" id="UP000002485">
    <property type="component" value="Chromosome I"/>
</dbReference>
<dbReference type="GO" id="GO:0005737">
    <property type="term" value="C:cytoplasm"/>
    <property type="evidence" value="ECO:0000316"/>
    <property type="project" value="PomBase"/>
</dbReference>
<dbReference type="GO" id="GO:0005829">
    <property type="term" value="C:cytosol"/>
    <property type="evidence" value="ECO:0007005"/>
    <property type="project" value="PomBase"/>
</dbReference>
<dbReference type="GO" id="GO:0005759">
    <property type="term" value="C:mitochondrial matrix"/>
    <property type="evidence" value="ECO:0000305"/>
    <property type="project" value="PomBase"/>
</dbReference>
<dbReference type="GO" id="GO:0005739">
    <property type="term" value="C:mitochondrion"/>
    <property type="evidence" value="ECO:0000316"/>
    <property type="project" value="PomBase"/>
</dbReference>
<dbReference type="GO" id="GO:0005524">
    <property type="term" value="F:ATP binding"/>
    <property type="evidence" value="ECO:0000266"/>
    <property type="project" value="PomBase"/>
</dbReference>
<dbReference type="GO" id="GO:0141192">
    <property type="term" value="F:ATP:ATP adenylyltransferase activity"/>
    <property type="evidence" value="ECO:0007669"/>
    <property type="project" value="RHEA"/>
</dbReference>
<dbReference type="GO" id="GO:0004820">
    <property type="term" value="F:glycine-tRNA ligase activity"/>
    <property type="evidence" value="ECO:0000316"/>
    <property type="project" value="PomBase"/>
</dbReference>
<dbReference type="GO" id="GO:0046983">
    <property type="term" value="F:protein dimerization activity"/>
    <property type="evidence" value="ECO:0000250"/>
    <property type="project" value="UniProtKB"/>
</dbReference>
<dbReference type="GO" id="GO:0002181">
    <property type="term" value="P:cytoplasmic translation"/>
    <property type="evidence" value="ECO:0000303"/>
    <property type="project" value="PomBase"/>
</dbReference>
<dbReference type="GO" id="GO:0015966">
    <property type="term" value="P:diadenosine tetraphosphate biosynthetic process"/>
    <property type="evidence" value="ECO:0000250"/>
    <property type="project" value="UniProtKB"/>
</dbReference>
<dbReference type="GO" id="GO:0006426">
    <property type="term" value="P:glycyl-tRNA aminoacylation"/>
    <property type="evidence" value="ECO:0000316"/>
    <property type="project" value="PomBase"/>
</dbReference>
<dbReference type="GO" id="GO:0070150">
    <property type="term" value="P:mitochondrial glycyl-tRNA aminoacylation"/>
    <property type="evidence" value="ECO:0000318"/>
    <property type="project" value="GO_Central"/>
</dbReference>
<dbReference type="CDD" id="cd00774">
    <property type="entry name" value="GlyRS-like_core"/>
    <property type="match status" value="1"/>
</dbReference>
<dbReference type="CDD" id="cd00858">
    <property type="entry name" value="GlyRS_anticodon"/>
    <property type="match status" value="1"/>
</dbReference>
<dbReference type="FunFam" id="3.30.720.200:FF:000001">
    <property type="entry name" value="Glycine--tRNA ligase 2"/>
    <property type="match status" value="1"/>
</dbReference>
<dbReference type="FunFam" id="3.40.50.800:FF:000004">
    <property type="entry name" value="Glycine--tRNA ligase 2"/>
    <property type="match status" value="1"/>
</dbReference>
<dbReference type="FunFam" id="3.30.930.10:FF:000158">
    <property type="entry name" value="Glycyl-tRNA synthetase"/>
    <property type="match status" value="1"/>
</dbReference>
<dbReference type="FunFam" id="3.30.40.230:FF:000002">
    <property type="entry name" value="Glycyl-tRNA synthetase 1"/>
    <property type="match status" value="1"/>
</dbReference>
<dbReference type="FunFam" id="3.30.930.10:FF:000010">
    <property type="entry name" value="Glycyl-tRNA synthetase 1"/>
    <property type="match status" value="1"/>
</dbReference>
<dbReference type="Gene3D" id="3.30.40.230">
    <property type="match status" value="1"/>
</dbReference>
<dbReference type="Gene3D" id="3.30.720.200">
    <property type="match status" value="1"/>
</dbReference>
<dbReference type="Gene3D" id="3.40.50.800">
    <property type="entry name" value="Anticodon-binding domain"/>
    <property type="match status" value="1"/>
</dbReference>
<dbReference type="Gene3D" id="3.30.930.10">
    <property type="entry name" value="Bira Bifunctional Protein, Domain 2"/>
    <property type="match status" value="1"/>
</dbReference>
<dbReference type="InterPro" id="IPR006195">
    <property type="entry name" value="aa-tRNA-synth_II"/>
</dbReference>
<dbReference type="InterPro" id="IPR045864">
    <property type="entry name" value="aa-tRNA-synth_II/BPL/LPL"/>
</dbReference>
<dbReference type="InterPro" id="IPR004154">
    <property type="entry name" value="Anticodon-bd"/>
</dbReference>
<dbReference type="InterPro" id="IPR036621">
    <property type="entry name" value="Anticodon-bd_dom_sf"/>
</dbReference>
<dbReference type="InterPro" id="IPR027031">
    <property type="entry name" value="Gly-tRNA_synthase/POLG2"/>
</dbReference>
<dbReference type="InterPro" id="IPR033731">
    <property type="entry name" value="GlyRS-like_core"/>
</dbReference>
<dbReference type="InterPro" id="IPR002315">
    <property type="entry name" value="tRNA-synt_gly"/>
</dbReference>
<dbReference type="NCBIfam" id="TIGR00389">
    <property type="entry name" value="glyS_dimeric"/>
    <property type="match status" value="1"/>
</dbReference>
<dbReference type="NCBIfam" id="NF003211">
    <property type="entry name" value="PRK04173.1"/>
    <property type="match status" value="1"/>
</dbReference>
<dbReference type="PANTHER" id="PTHR10745:SF0">
    <property type="entry name" value="GLYCINE--TRNA LIGASE"/>
    <property type="match status" value="1"/>
</dbReference>
<dbReference type="PANTHER" id="PTHR10745">
    <property type="entry name" value="GLYCYL-TRNA SYNTHETASE/DNA POLYMERASE SUBUNIT GAMMA-2"/>
    <property type="match status" value="1"/>
</dbReference>
<dbReference type="Pfam" id="PF03129">
    <property type="entry name" value="HGTP_anticodon"/>
    <property type="match status" value="1"/>
</dbReference>
<dbReference type="PRINTS" id="PR01043">
    <property type="entry name" value="TRNASYNTHGLY"/>
</dbReference>
<dbReference type="SUPFAM" id="SSF52954">
    <property type="entry name" value="Class II aaRS ABD-related"/>
    <property type="match status" value="1"/>
</dbReference>
<dbReference type="SUPFAM" id="SSF55681">
    <property type="entry name" value="Class II aaRS and biotin synthetases"/>
    <property type="match status" value="1"/>
</dbReference>
<dbReference type="PROSITE" id="PS50862">
    <property type="entry name" value="AA_TRNA_LIGASE_II"/>
    <property type="match status" value="1"/>
</dbReference>